<comment type="function">
    <text evidence="1">Associates with the EF-Tu.GDP complex and induces the exchange of GDP to GTP. It remains bound to the aminoacyl-tRNA.EF-Tu.GTP complex up to the GTP hydrolysis stage on the ribosome.</text>
</comment>
<comment type="subcellular location">
    <subcellularLocation>
        <location evidence="1">Cytoplasm</location>
    </subcellularLocation>
</comment>
<comment type="similarity">
    <text evidence="1">Belongs to the EF-Ts family.</text>
</comment>
<keyword id="KW-0963">Cytoplasm</keyword>
<keyword id="KW-0251">Elongation factor</keyword>
<keyword id="KW-0648">Protein biosynthesis</keyword>
<keyword id="KW-1185">Reference proteome</keyword>
<proteinExistence type="inferred from homology"/>
<evidence type="ECO:0000255" key="1">
    <source>
        <dbReference type="HAMAP-Rule" id="MF_00050"/>
    </source>
</evidence>
<dbReference type="EMBL" id="AE016830">
    <property type="protein sequence ID" value="AAO82118.1"/>
    <property type="molecule type" value="Genomic_DNA"/>
</dbReference>
<dbReference type="RefSeq" id="NP_816048.1">
    <property type="nucleotide sequence ID" value="NC_004668.1"/>
</dbReference>
<dbReference type="RefSeq" id="WP_002356760.1">
    <property type="nucleotide sequence ID" value="NZ_KE136528.1"/>
</dbReference>
<dbReference type="SMR" id="Q831V0"/>
<dbReference type="STRING" id="226185.EF_2397"/>
<dbReference type="EnsemblBacteria" id="AAO82118">
    <property type="protein sequence ID" value="AAO82118"/>
    <property type="gene ID" value="EF_2397"/>
</dbReference>
<dbReference type="GeneID" id="60894450"/>
<dbReference type="KEGG" id="efa:EF2397"/>
<dbReference type="PATRIC" id="fig|226185.45.peg.1144"/>
<dbReference type="eggNOG" id="COG0264">
    <property type="taxonomic scope" value="Bacteria"/>
</dbReference>
<dbReference type="HOGENOM" id="CLU_047155_0_2_9"/>
<dbReference type="Proteomes" id="UP000001415">
    <property type="component" value="Chromosome"/>
</dbReference>
<dbReference type="GO" id="GO:0005737">
    <property type="term" value="C:cytoplasm"/>
    <property type="evidence" value="ECO:0007669"/>
    <property type="project" value="UniProtKB-SubCell"/>
</dbReference>
<dbReference type="GO" id="GO:0003746">
    <property type="term" value="F:translation elongation factor activity"/>
    <property type="evidence" value="ECO:0007669"/>
    <property type="project" value="UniProtKB-UniRule"/>
</dbReference>
<dbReference type="CDD" id="cd14275">
    <property type="entry name" value="UBA_EF-Ts"/>
    <property type="match status" value="1"/>
</dbReference>
<dbReference type="FunFam" id="1.10.286.20:FF:000001">
    <property type="entry name" value="Elongation factor Ts"/>
    <property type="match status" value="1"/>
</dbReference>
<dbReference type="FunFam" id="1.10.8.10:FF:000001">
    <property type="entry name" value="Elongation factor Ts"/>
    <property type="match status" value="1"/>
</dbReference>
<dbReference type="Gene3D" id="1.10.286.20">
    <property type="match status" value="1"/>
</dbReference>
<dbReference type="Gene3D" id="1.10.8.10">
    <property type="entry name" value="DNA helicase RuvA subunit, C-terminal domain"/>
    <property type="match status" value="1"/>
</dbReference>
<dbReference type="Gene3D" id="3.30.479.20">
    <property type="entry name" value="Elongation factor Ts, dimerisation domain"/>
    <property type="match status" value="2"/>
</dbReference>
<dbReference type="HAMAP" id="MF_00050">
    <property type="entry name" value="EF_Ts"/>
    <property type="match status" value="1"/>
</dbReference>
<dbReference type="InterPro" id="IPR036402">
    <property type="entry name" value="EF-Ts_dimer_sf"/>
</dbReference>
<dbReference type="InterPro" id="IPR001816">
    <property type="entry name" value="Transl_elong_EFTs/EF1B"/>
</dbReference>
<dbReference type="InterPro" id="IPR014039">
    <property type="entry name" value="Transl_elong_EFTs/EF1B_dimer"/>
</dbReference>
<dbReference type="InterPro" id="IPR018101">
    <property type="entry name" value="Transl_elong_Ts_CS"/>
</dbReference>
<dbReference type="InterPro" id="IPR009060">
    <property type="entry name" value="UBA-like_sf"/>
</dbReference>
<dbReference type="NCBIfam" id="TIGR00116">
    <property type="entry name" value="tsf"/>
    <property type="match status" value="1"/>
</dbReference>
<dbReference type="PANTHER" id="PTHR11741">
    <property type="entry name" value="ELONGATION FACTOR TS"/>
    <property type="match status" value="1"/>
</dbReference>
<dbReference type="PANTHER" id="PTHR11741:SF0">
    <property type="entry name" value="ELONGATION FACTOR TS, MITOCHONDRIAL"/>
    <property type="match status" value="1"/>
</dbReference>
<dbReference type="Pfam" id="PF00889">
    <property type="entry name" value="EF_TS"/>
    <property type="match status" value="1"/>
</dbReference>
<dbReference type="SUPFAM" id="SSF54713">
    <property type="entry name" value="Elongation factor Ts (EF-Ts), dimerisation domain"/>
    <property type="match status" value="2"/>
</dbReference>
<dbReference type="SUPFAM" id="SSF46934">
    <property type="entry name" value="UBA-like"/>
    <property type="match status" value="1"/>
</dbReference>
<dbReference type="PROSITE" id="PS01126">
    <property type="entry name" value="EF_TS_1"/>
    <property type="match status" value="1"/>
</dbReference>
<dbReference type="PROSITE" id="PS01127">
    <property type="entry name" value="EF_TS_2"/>
    <property type="match status" value="1"/>
</dbReference>
<organism>
    <name type="scientific">Enterococcus faecalis (strain ATCC 700802 / V583)</name>
    <dbReference type="NCBI Taxonomy" id="226185"/>
    <lineage>
        <taxon>Bacteria</taxon>
        <taxon>Bacillati</taxon>
        <taxon>Bacillota</taxon>
        <taxon>Bacilli</taxon>
        <taxon>Lactobacillales</taxon>
        <taxon>Enterococcaceae</taxon>
        <taxon>Enterococcus</taxon>
    </lineage>
</organism>
<name>EFTS_ENTFA</name>
<feature type="chain" id="PRO_0000161120" description="Elongation factor Ts">
    <location>
        <begin position="1"/>
        <end position="293"/>
    </location>
</feature>
<feature type="region of interest" description="Involved in Mg(2+) ion dislocation from EF-Tu" evidence="1">
    <location>
        <begin position="80"/>
        <end position="83"/>
    </location>
</feature>
<accession>Q831V0</accession>
<sequence length="293" mass="32134">MADVTAKMVKELRDMTGVGMMDAKKALVKVEGDMEKAVDFLRENGMAKAAKKNDRIAAEGLANVATVGNVAAIVEVNSETDFVSKNEMFQDLVKDIATKVAENKPATMEEAMAIKTEKGTIESDLIEATTVIGEKISFRRFEVVEKADNAAFGAYLHMGGRIAVLTVIDGTTDEEVAKDVAMHIAAINPRYVNESQIPQEELEHEKAVLTEQALNEGKPANIVEKMVVGRLQKFKAEIALVDQPFVKDPDMTVEKFVASKGGEVKSFVRFEVGEGIEKREDNFADEVMSQMKN</sequence>
<protein>
    <recommendedName>
        <fullName evidence="1">Elongation factor Ts</fullName>
        <shortName evidence="1">EF-Ts</shortName>
    </recommendedName>
</protein>
<gene>
    <name evidence="1" type="primary">tsf</name>
    <name type="ordered locus">EF_2397</name>
</gene>
<reference key="1">
    <citation type="journal article" date="2003" name="Science">
        <title>Role of mobile DNA in the evolution of vancomycin-resistant Enterococcus faecalis.</title>
        <authorList>
            <person name="Paulsen I.T."/>
            <person name="Banerjei L."/>
            <person name="Myers G.S.A."/>
            <person name="Nelson K.E."/>
            <person name="Seshadri R."/>
            <person name="Read T.D."/>
            <person name="Fouts D.E."/>
            <person name="Eisen J.A."/>
            <person name="Gill S.R."/>
            <person name="Heidelberg J.F."/>
            <person name="Tettelin H."/>
            <person name="Dodson R.J."/>
            <person name="Umayam L.A."/>
            <person name="Brinkac L.M."/>
            <person name="Beanan M.J."/>
            <person name="Daugherty S.C."/>
            <person name="DeBoy R.T."/>
            <person name="Durkin S.A."/>
            <person name="Kolonay J.F."/>
            <person name="Madupu R."/>
            <person name="Nelson W.C."/>
            <person name="Vamathevan J.J."/>
            <person name="Tran B."/>
            <person name="Upton J."/>
            <person name="Hansen T."/>
            <person name="Shetty J."/>
            <person name="Khouri H.M."/>
            <person name="Utterback T.R."/>
            <person name="Radune D."/>
            <person name="Ketchum K.A."/>
            <person name="Dougherty B.A."/>
            <person name="Fraser C.M."/>
        </authorList>
    </citation>
    <scope>NUCLEOTIDE SEQUENCE [LARGE SCALE GENOMIC DNA]</scope>
    <source>
        <strain>ATCC 700802 / V583</strain>
    </source>
</reference>